<comment type="function">
    <text evidence="2 3">Regulatory subunit of casein kinase II/CK2. As part of the kinase complex regulates the basal catalytic activity of the alpha subunit a constitutively active serine/threonine-protein kinase that phosphorylates a large number of substrates containing acidic residues C-terminal to the phosphorylated serine or threonine (By similarity). Participates in Wnt signaling (By similarity).</text>
</comment>
<comment type="subunit">
    <text evidence="1 2">Casein kinase II/CK2 is a tetramer composed of an alpha subunit, an alpha' subunit and two beta subunits. The beta subunit dimerization is mediated by zinc ions. Interacts with DYNLT2 (By similarity). Interacts with CD163. Also a component of a CK2-SPT16-SSRP1 complex composed of SSRP1, SUPT16H, CSNK2A1, CSNK2A2 and CSNK2B, the complex associating following UV irradiation. Interacts with MUSK; mediates phosphorylation of MUSK by CK2. Interacts with FGF1; this interaction is increased in the presence of FIBP, suggesting a possible cooperative interaction between CSNKB and FIBP in binding to FGF1 (By similarity). Interacts (via KSSR motif) with ARK2N. Interacts with JUN and ARK2N; mediates the interaction between ARK2N and JUN (By similarity).</text>
</comment>
<comment type="subcellular location">
    <subcellularLocation>
        <location evidence="2">Nucleus</location>
    </subcellularLocation>
</comment>
<comment type="domain">
    <text evidence="2">The KSSR motif is part of a protein interaction pocket that mediates interaction with cellular and viral proteins.</text>
</comment>
<comment type="PTM">
    <text evidence="1">Phosphorylated by alpha subunit.</text>
</comment>
<comment type="PTM">
    <text>The N-terminus is blocked.</text>
</comment>
<comment type="similarity">
    <text evidence="4">Belongs to the casein kinase 2 subunit beta family.</text>
</comment>
<name>CSK2B_BOVIN</name>
<reference key="1">
    <citation type="submission" date="2005-11" db="EMBL/GenBank/DDBJ databases">
        <authorList>
            <consortium name="NIH - Mammalian Gene Collection (MGC) project"/>
        </authorList>
    </citation>
    <scope>NUCLEOTIDE SEQUENCE [LARGE SCALE MRNA]</scope>
    <source>
        <strain>Crossbred X Angus</strain>
        <tissue>Liver</tissue>
    </source>
</reference>
<reference key="2">
    <citation type="journal article" date="1987" name="Proc. Natl. Acad. Sci. U.S.A.">
        <title>Amino acid sequence of the beta subunit of bovine lung casein kinase II.</title>
        <authorList>
            <person name="Takio K."/>
            <person name="Kuenzel E.A."/>
            <person name="Walsh K.A."/>
            <person name="Krebs E.G."/>
        </authorList>
    </citation>
    <scope>PROTEIN SEQUENCE OF 4-213</scope>
    <source>
        <tissue>Lung</tissue>
    </source>
</reference>
<protein>
    <recommendedName>
        <fullName>Casein kinase II subunit beta</fullName>
        <shortName>CK II beta</shortName>
    </recommendedName>
    <alternativeName>
        <fullName>Phosvitin</fullName>
    </alternativeName>
</protein>
<feature type="initiator methionine" description="Removed" evidence="2">
    <location>
        <position position="1"/>
    </location>
</feature>
<feature type="chain" id="PRO_0000068235" description="Casein kinase II subunit beta">
    <location>
        <begin position="2"/>
        <end position="215"/>
    </location>
</feature>
<feature type="region of interest" description="Interaction with alpha subunit" evidence="1">
    <location>
        <begin position="188"/>
        <end position="193"/>
    </location>
</feature>
<feature type="short sequence motif" description="KSSR motif" evidence="2">
    <location>
        <begin position="147"/>
        <end position="150"/>
    </location>
</feature>
<feature type="binding site" evidence="1">
    <location>
        <position position="109"/>
    </location>
    <ligand>
        <name>Zn(2+)</name>
        <dbReference type="ChEBI" id="CHEBI:29105"/>
    </ligand>
</feature>
<feature type="binding site" evidence="1">
    <location>
        <position position="114"/>
    </location>
    <ligand>
        <name>Zn(2+)</name>
        <dbReference type="ChEBI" id="CHEBI:29105"/>
    </ligand>
</feature>
<feature type="binding site" evidence="1">
    <location>
        <position position="137"/>
    </location>
    <ligand>
        <name>Zn(2+)</name>
        <dbReference type="ChEBI" id="CHEBI:29105"/>
    </ligand>
</feature>
<feature type="binding site" evidence="1">
    <location>
        <position position="140"/>
    </location>
    <ligand>
        <name>Zn(2+)</name>
        <dbReference type="ChEBI" id="CHEBI:29105"/>
    </ligand>
</feature>
<feature type="modified residue" description="N-acetylserine" evidence="2">
    <location>
        <position position="2"/>
    </location>
</feature>
<feature type="modified residue" description="Phosphoserine; by autocatalysis" evidence="2 4">
    <location>
        <position position="2"/>
    </location>
</feature>
<feature type="modified residue" description="Phosphoserine; by autocatalysis" evidence="2">
    <location>
        <position position="3"/>
    </location>
</feature>
<feature type="modified residue" description="Phosphoserine" evidence="2">
    <location>
        <position position="8"/>
    </location>
</feature>
<feature type="modified residue" description="Phosphothreonine" evidence="2">
    <location>
        <position position="37"/>
    </location>
</feature>
<feature type="modified residue" description="Phosphoserine" evidence="2">
    <location>
        <position position="69"/>
    </location>
</feature>
<feature type="modified residue" description="Phosphoserine" evidence="2">
    <location>
        <position position="209"/>
    </location>
</feature>
<feature type="modified residue" description="N6-acetyllysine; alternate" evidence="2">
    <location>
        <position position="212"/>
    </location>
</feature>
<feature type="cross-link" description="Glycyl lysine isopeptide (Lys-Gly) (interchain with G-Cter in SUMO2); alternate" evidence="2">
    <location>
        <position position="212"/>
    </location>
</feature>
<feature type="sequence conflict" description="In Ref. 2; AA sequence." evidence="4" ref="2">
    <location>
        <position position="5"/>
    </location>
</feature>
<dbReference type="EMBL" id="BC110170">
    <property type="protein sequence ID" value="AAI10171.1"/>
    <property type="molecule type" value="mRNA"/>
</dbReference>
<dbReference type="PIR" id="A25828">
    <property type="entry name" value="A25828"/>
</dbReference>
<dbReference type="RefSeq" id="NP_001039919.1">
    <property type="nucleotide sequence ID" value="NM_001046454.1"/>
</dbReference>
<dbReference type="SMR" id="P67868"/>
<dbReference type="BioGRID" id="195802">
    <property type="interactions" value="6"/>
</dbReference>
<dbReference type="CORUM" id="P67868"/>
<dbReference type="DIP" id="DIP-12N"/>
<dbReference type="FunCoup" id="P67868">
    <property type="interactions" value="4660"/>
</dbReference>
<dbReference type="IntAct" id="P67868">
    <property type="interactions" value="1"/>
</dbReference>
<dbReference type="STRING" id="9913.ENSBTAP00000042926"/>
<dbReference type="ChEMBL" id="CHEMBL3988628"/>
<dbReference type="PaxDb" id="9913-ENSBTAP00000042926"/>
<dbReference type="GeneID" id="539235"/>
<dbReference type="KEGG" id="bta:539235"/>
<dbReference type="CTD" id="1460"/>
<dbReference type="VEuPathDB" id="HostDB:ENSBTAG00000008837"/>
<dbReference type="eggNOG" id="KOG3092">
    <property type="taxonomic scope" value="Eukaryota"/>
</dbReference>
<dbReference type="HOGENOM" id="CLU_034027_3_3_1"/>
<dbReference type="InParanoid" id="P67868"/>
<dbReference type="OMA" id="DADFGRC"/>
<dbReference type="OrthoDB" id="3971593at2759"/>
<dbReference type="TreeFam" id="TF314462"/>
<dbReference type="Reactome" id="R-BTA-1483191">
    <property type="pathway name" value="Synthesis of PC"/>
</dbReference>
<dbReference type="Reactome" id="R-BTA-201688">
    <property type="pathway name" value="WNT mediated activation of DVL"/>
</dbReference>
<dbReference type="Reactome" id="R-BTA-2514853">
    <property type="pathway name" value="Condensation of Prometaphase Chromosomes"/>
</dbReference>
<dbReference type="Reactome" id="R-BTA-6798695">
    <property type="pathway name" value="Neutrophil degranulation"/>
</dbReference>
<dbReference type="Reactome" id="R-BTA-6804756">
    <property type="pathway name" value="Regulation of TP53 Activity through Phosphorylation"/>
</dbReference>
<dbReference type="Reactome" id="R-BTA-6814122">
    <property type="pathway name" value="Cooperation of PDCL (PhLP1) and TRiC/CCT in G-protein beta folding"/>
</dbReference>
<dbReference type="Reactome" id="R-BTA-8934903">
    <property type="pathway name" value="Receptor Mediated Mitophagy"/>
</dbReference>
<dbReference type="Reactome" id="R-BTA-8939243">
    <property type="pathway name" value="RUNX1 interacts with co-factors whose precise effect on RUNX1 targets is not known"/>
</dbReference>
<dbReference type="Reactome" id="R-BTA-8948751">
    <property type="pathway name" value="Regulation of PTEN stability and activity"/>
</dbReference>
<dbReference type="CD-CODE" id="D7FE2080">
    <property type="entry name" value="Nucleolus"/>
</dbReference>
<dbReference type="Proteomes" id="UP000009136">
    <property type="component" value="Chromosome 23"/>
</dbReference>
<dbReference type="Bgee" id="ENSBTAG00000008837">
    <property type="expression patterns" value="Expressed in spermatid and 104 other cell types or tissues"/>
</dbReference>
<dbReference type="GO" id="GO:0005737">
    <property type="term" value="C:cytoplasm"/>
    <property type="evidence" value="ECO:0000318"/>
    <property type="project" value="GO_Central"/>
</dbReference>
<dbReference type="GO" id="GO:0005634">
    <property type="term" value="C:nucleus"/>
    <property type="evidence" value="ECO:0007669"/>
    <property type="project" value="UniProtKB-SubCell"/>
</dbReference>
<dbReference type="GO" id="GO:0005956">
    <property type="term" value="C:protein kinase CK2 complex"/>
    <property type="evidence" value="ECO:0000318"/>
    <property type="project" value="GO_Central"/>
</dbReference>
<dbReference type="GO" id="GO:0046872">
    <property type="term" value="F:metal ion binding"/>
    <property type="evidence" value="ECO:0007669"/>
    <property type="project" value="UniProtKB-KW"/>
</dbReference>
<dbReference type="GO" id="GO:0019887">
    <property type="term" value="F:protein kinase regulator activity"/>
    <property type="evidence" value="ECO:0000318"/>
    <property type="project" value="GO_Central"/>
</dbReference>
<dbReference type="GO" id="GO:0046719">
    <property type="term" value="P:regulation by virus of viral protein levels in host cell"/>
    <property type="evidence" value="ECO:0000315"/>
    <property type="project" value="AgBase"/>
</dbReference>
<dbReference type="GO" id="GO:0042325">
    <property type="term" value="P:regulation of phosphorylation"/>
    <property type="evidence" value="ECO:0000314"/>
    <property type="project" value="AgBase"/>
</dbReference>
<dbReference type="GO" id="GO:0050792">
    <property type="term" value="P:regulation of viral process"/>
    <property type="evidence" value="ECO:0000315"/>
    <property type="project" value="AgBase"/>
</dbReference>
<dbReference type="GO" id="GO:0016055">
    <property type="term" value="P:Wnt signaling pathway"/>
    <property type="evidence" value="ECO:0007669"/>
    <property type="project" value="UniProtKB-KW"/>
</dbReference>
<dbReference type="FunFam" id="1.10.1820.10:FF:000001">
    <property type="entry name" value="Casein kinase II subunit beta"/>
    <property type="match status" value="1"/>
</dbReference>
<dbReference type="FunFam" id="2.20.25.20:FF:000002">
    <property type="entry name" value="Casein kinase II subunit beta"/>
    <property type="match status" value="1"/>
</dbReference>
<dbReference type="Gene3D" id="2.20.25.20">
    <property type="match status" value="1"/>
</dbReference>
<dbReference type="Gene3D" id="1.10.1820.10">
    <property type="entry name" value="protein kinase ck2 holoenzyme, chain C, domain 1"/>
    <property type="match status" value="1"/>
</dbReference>
<dbReference type="InterPro" id="IPR016149">
    <property type="entry name" value="Casein_kin_II_reg-sub_N"/>
</dbReference>
<dbReference type="InterPro" id="IPR035991">
    <property type="entry name" value="Casein_kinase_II_beta-like"/>
</dbReference>
<dbReference type="InterPro" id="IPR000704">
    <property type="entry name" value="Casein_kinase_II_reg-sub"/>
</dbReference>
<dbReference type="PANTHER" id="PTHR11740">
    <property type="entry name" value="CASEIN KINASE II SUBUNIT BETA"/>
    <property type="match status" value="1"/>
</dbReference>
<dbReference type="PANTHER" id="PTHR11740:SF0">
    <property type="entry name" value="CASEIN KINASE II SUBUNIT BETA"/>
    <property type="match status" value="1"/>
</dbReference>
<dbReference type="Pfam" id="PF01214">
    <property type="entry name" value="CK_II_beta"/>
    <property type="match status" value="1"/>
</dbReference>
<dbReference type="PRINTS" id="PR00472">
    <property type="entry name" value="CASNKINASEII"/>
</dbReference>
<dbReference type="SMART" id="SM01085">
    <property type="entry name" value="CK_II_beta"/>
    <property type="match status" value="1"/>
</dbReference>
<dbReference type="SUPFAM" id="SSF57798">
    <property type="entry name" value="Casein kinase II beta subunit"/>
    <property type="match status" value="1"/>
</dbReference>
<dbReference type="PROSITE" id="PS01101">
    <property type="entry name" value="CK2_BETA"/>
    <property type="match status" value="1"/>
</dbReference>
<proteinExistence type="evidence at protein level"/>
<sequence>MSSSEEVSWISWFCGLRGNEFFCEVDEDYIQDKFNLTGLNEQVPHYRQALDMILDLEPDEELEDNPNQSDLIEQAAEMLYGLIHARYILTNRGIAQMLEKYQQGDFGYCPRVYCENQPMLPIGLSDIPGEAMVKLYCPKCMDVYTPKSSRHHHTDGAYFGTGFPHMLFMVHPEYRPKRPANQFVPRLYGFKIHPMAYQLQLQAASNFKSPVKTIR</sequence>
<organism>
    <name type="scientific">Bos taurus</name>
    <name type="common">Bovine</name>
    <dbReference type="NCBI Taxonomy" id="9913"/>
    <lineage>
        <taxon>Eukaryota</taxon>
        <taxon>Metazoa</taxon>
        <taxon>Chordata</taxon>
        <taxon>Craniata</taxon>
        <taxon>Vertebrata</taxon>
        <taxon>Euteleostomi</taxon>
        <taxon>Mammalia</taxon>
        <taxon>Eutheria</taxon>
        <taxon>Laurasiatheria</taxon>
        <taxon>Artiodactyla</taxon>
        <taxon>Ruminantia</taxon>
        <taxon>Pecora</taxon>
        <taxon>Bovidae</taxon>
        <taxon>Bovinae</taxon>
        <taxon>Bos</taxon>
    </lineage>
</organism>
<keyword id="KW-0007">Acetylation</keyword>
<keyword id="KW-0903">Direct protein sequencing</keyword>
<keyword id="KW-1017">Isopeptide bond</keyword>
<keyword id="KW-0479">Metal-binding</keyword>
<keyword id="KW-0539">Nucleus</keyword>
<keyword id="KW-0597">Phosphoprotein</keyword>
<keyword id="KW-1185">Reference proteome</keyword>
<keyword id="KW-0832">Ubl conjugation</keyword>
<keyword id="KW-0879">Wnt signaling pathway</keyword>
<keyword id="KW-0862">Zinc</keyword>
<gene>
    <name type="primary">CSNK2B</name>
    <name type="synonym">CK2N</name>
</gene>
<evidence type="ECO:0000250" key="1"/>
<evidence type="ECO:0000250" key="2">
    <source>
        <dbReference type="UniProtKB" id="P67870"/>
    </source>
</evidence>
<evidence type="ECO:0000250" key="3">
    <source>
        <dbReference type="UniProtKB" id="P67871"/>
    </source>
</evidence>
<evidence type="ECO:0000305" key="4"/>
<accession>P67868</accession>
<accession>P07312</accession>
<accession>P13862</accession>
<accession>Q2YDL2</accession>